<proteinExistence type="inferred from homology"/>
<keyword id="KW-1003">Cell membrane</keyword>
<keyword id="KW-0472">Membrane</keyword>
<keyword id="KW-1185">Reference proteome</keyword>
<keyword id="KW-0812">Transmembrane</keyword>
<keyword id="KW-1133">Transmembrane helix</keyword>
<sequence length="164" mass="18037">MGDVEIPPLVKQIVRGLRGLAFLATILATSFMAASHERAIFPFDYKADYTDLMLFKAFLGANIAASLYSFFFVCLPPKSLLWRLAIVLDVIMFGLLVAMDSAAIAAAYLHKHGDSQAFWPPICSQVPTYCYRVILAISIGFGGVFMFLLIIIISISVILNPLLV</sequence>
<accession>B9IK21</accession>
<protein>
    <recommendedName>
        <fullName>CASP-like protein 1C1</fullName>
        <shortName>PtCASPL1C1</shortName>
    </recommendedName>
</protein>
<organism>
    <name type="scientific">Populus trichocarpa</name>
    <name type="common">Western balsam poplar</name>
    <name type="synonym">Populus balsamifera subsp. trichocarpa</name>
    <dbReference type="NCBI Taxonomy" id="3694"/>
    <lineage>
        <taxon>Eukaryota</taxon>
        <taxon>Viridiplantae</taxon>
        <taxon>Streptophyta</taxon>
        <taxon>Embryophyta</taxon>
        <taxon>Tracheophyta</taxon>
        <taxon>Spermatophyta</taxon>
        <taxon>Magnoliopsida</taxon>
        <taxon>eudicotyledons</taxon>
        <taxon>Gunneridae</taxon>
        <taxon>Pentapetalae</taxon>
        <taxon>rosids</taxon>
        <taxon>fabids</taxon>
        <taxon>Malpighiales</taxon>
        <taxon>Salicaceae</taxon>
        <taxon>Saliceae</taxon>
        <taxon>Populus</taxon>
    </lineage>
</organism>
<name>CSPL2_POPTR</name>
<comment type="subunit">
    <text evidence="1">Homodimer and heterodimers.</text>
</comment>
<comment type="subcellular location">
    <subcellularLocation>
        <location evidence="1">Cell membrane</location>
        <topology evidence="1">Multi-pass membrane protein</topology>
    </subcellularLocation>
</comment>
<comment type="similarity">
    <text evidence="3">Belongs to the Casparian strip membrane proteins (CASP) family.</text>
</comment>
<dbReference type="EMBL" id="CM009306">
    <property type="protein sequence ID" value="EEF04210.1"/>
    <property type="molecule type" value="Genomic_DNA"/>
</dbReference>
<dbReference type="STRING" id="3694.B9IK21"/>
<dbReference type="EnsemblPlants" id="Potri.017G088100.1.v4.1">
    <property type="protein sequence ID" value="Potri.017G088100.1.v4.1"/>
    <property type="gene ID" value="Potri.017G088100.v4.1"/>
</dbReference>
<dbReference type="Gramene" id="Potri.017G088100.1.v4.1">
    <property type="protein sequence ID" value="Potri.017G088100.1.v4.1"/>
    <property type="gene ID" value="Potri.017G088100.v4.1"/>
</dbReference>
<dbReference type="KEGG" id="pop:7484553"/>
<dbReference type="HOGENOM" id="CLU_066104_3_0_1"/>
<dbReference type="InParanoid" id="B9IK21"/>
<dbReference type="OMA" id="MGISHEP"/>
<dbReference type="OrthoDB" id="840125at2759"/>
<dbReference type="Proteomes" id="UP000006729">
    <property type="component" value="Chromosome 17"/>
</dbReference>
<dbReference type="GO" id="GO:0005886">
    <property type="term" value="C:plasma membrane"/>
    <property type="evidence" value="ECO:0007669"/>
    <property type="project" value="UniProtKB-SubCell"/>
</dbReference>
<dbReference type="InterPro" id="IPR006459">
    <property type="entry name" value="CASP/CASPL"/>
</dbReference>
<dbReference type="InterPro" id="IPR006702">
    <property type="entry name" value="CASP_dom"/>
</dbReference>
<dbReference type="NCBIfam" id="TIGR01569">
    <property type="entry name" value="A_tha_TIGR01569"/>
    <property type="match status" value="1"/>
</dbReference>
<dbReference type="PANTHER" id="PTHR33573:SF47">
    <property type="entry name" value="CASP-LIKE PROTEIN 1U1"/>
    <property type="match status" value="1"/>
</dbReference>
<dbReference type="PANTHER" id="PTHR33573">
    <property type="entry name" value="CASP-LIKE PROTEIN 4A4"/>
    <property type="match status" value="1"/>
</dbReference>
<dbReference type="Pfam" id="PF04535">
    <property type="entry name" value="CASP_dom"/>
    <property type="match status" value="1"/>
</dbReference>
<reference key="1">
    <citation type="journal article" date="2006" name="Science">
        <title>The genome of black cottonwood, Populus trichocarpa (Torr. &amp; Gray).</title>
        <authorList>
            <person name="Tuskan G.A."/>
            <person name="Difazio S."/>
            <person name="Jansson S."/>
            <person name="Bohlmann J."/>
            <person name="Grigoriev I."/>
            <person name="Hellsten U."/>
            <person name="Putnam N."/>
            <person name="Ralph S."/>
            <person name="Rombauts S."/>
            <person name="Salamov A."/>
            <person name="Schein J."/>
            <person name="Sterck L."/>
            <person name="Aerts A."/>
            <person name="Bhalerao R.R."/>
            <person name="Bhalerao R.P."/>
            <person name="Blaudez D."/>
            <person name="Boerjan W."/>
            <person name="Brun A."/>
            <person name="Brunner A."/>
            <person name="Busov V."/>
            <person name="Campbell M."/>
            <person name="Carlson J."/>
            <person name="Chalot M."/>
            <person name="Chapman J."/>
            <person name="Chen G.-L."/>
            <person name="Cooper D."/>
            <person name="Coutinho P.M."/>
            <person name="Couturier J."/>
            <person name="Covert S."/>
            <person name="Cronk Q."/>
            <person name="Cunningham R."/>
            <person name="Davis J."/>
            <person name="Degroeve S."/>
            <person name="Dejardin A."/>
            <person name="dePamphilis C.W."/>
            <person name="Detter J."/>
            <person name="Dirks B."/>
            <person name="Dubchak I."/>
            <person name="Duplessis S."/>
            <person name="Ehlting J."/>
            <person name="Ellis B."/>
            <person name="Gendler K."/>
            <person name="Goodstein D."/>
            <person name="Gribskov M."/>
            <person name="Grimwood J."/>
            <person name="Groover A."/>
            <person name="Gunter L."/>
            <person name="Hamberger B."/>
            <person name="Heinze B."/>
            <person name="Helariutta Y."/>
            <person name="Henrissat B."/>
            <person name="Holligan D."/>
            <person name="Holt R."/>
            <person name="Huang W."/>
            <person name="Islam-Faridi N."/>
            <person name="Jones S."/>
            <person name="Jones-Rhoades M."/>
            <person name="Jorgensen R."/>
            <person name="Joshi C."/>
            <person name="Kangasjaervi J."/>
            <person name="Karlsson J."/>
            <person name="Kelleher C."/>
            <person name="Kirkpatrick R."/>
            <person name="Kirst M."/>
            <person name="Kohler A."/>
            <person name="Kalluri U."/>
            <person name="Larimer F."/>
            <person name="Leebens-Mack J."/>
            <person name="Leple J.-C."/>
            <person name="Locascio P."/>
            <person name="Lou Y."/>
            <person name="Lucas S."/>
            <person name="Martin F."/>
            <person name="Montanini B."/>
            <person name="Napoli C."/>
            <person name="Nelson D.R."/>
            <person name="Nelson C."/>
            <person name="Nieminen K."/>
            <person name="Nilsson O."/>
            <person name="Pereda V."/>
            <person name="Peter G."/>
            <person name="Philippe R."/>
            <person name="Pilate G."/>
            <person name="Poliakov A."/>
            <person name="Razumovskaya J."/>
            <person name="Richardson P."/>
            <person name="Rinaldi C."/>
            <person name="Ritland K."/>
            <person name="Rouze P."/>
            <person name="Ryaboy D."/>
            <person name="Schmutz J."/>
            <person name="Schrader J."/>
            <person name="Segerman B."/>
            <person name="Shin H."/>
            <person name="Siddiqui A."/>
            <person name="Sterky F."/>
            <person name="Terry A."/>
            <person name="Tsai C.-J."/>
            <person name="Uberbacher E."/>
            <person name="Unneberg P."/>
            <person name="Vahala J."/>
            <person name="Wall K."/>
            <person name="Wessler S."/>
            <person name="Yang G."/>
            <person name="Yin T."/>
            <person name="Douglas C."/>
            <person name="Marra M."/>
            <person name="Sandberg G."/>
            <person name="Van de Peer Y."/>
            <person name="Rokhsar D.S."/>
        </authorList>
    </citation>
    <scope>NUCLEOTIDE SEQUENCE [LARGE SCALE GENOMIC DNA]</scope>
    <source>
        <strain>cv. Nisqually</strain>
    </source>
</reference>
<reference key="2">
    <citation type="submission" date="2008-12" db="EMBL/GenBank/DDBJ databases">
        <authorList>
            <consortium name="US DOE Joint Genome Institute (JGI-PGF)"/>
            <person name="Grigoriev I.V."/>
            <person name="Terry A."/>
            <person name="Salamov A.A."/>
            <person name="Otillar R."/>
            <person name="Lou Y."/>
            <person name="Lucas S."/>
            <person name="Hammon N."/>
            <person name="Glavina del Rio T."/>
            <person name="Detter J."/>
            <person name="Kalin E."/>
            <person name="Tice H."/>
            <person name="Pitluck S."/>
            <person name="Chapman J."/>
            <person name="Putnam N.H."/>
            <person name="Brunner A."/>
            <person name="Busov V."/>
            <person name="Campbell M."/>
            <person name="Chalot M."/>
            <person name="Covert S."/>
            <person name="Davis J."/>
            <person name="DiFazio S."/>
            <person name="Gribskov M."/>
            <person name="Gunter L."/>
            <person name="Hamberger B."/>
            <person name="Jansson S."/>
            <person name="Joshi C."/>
            <person name="Larimer F."/>
            <person name="Martin F."/>
            <person name="Napoli C."/>
            <person name="Nelson D."/>
            <person name="Ralph S."/>
            <person name="Rombauts S."/>
            <person name="Rouze P."/>
            <person name="Schrader J."/>
            <person name="Tsai C."/>
            <person name="Vahala J."/>
            <person name="Tuskan G."/>
            <person name="Rokhsar D."/>
        </authorList>
    </citation>
    <scope>GENOME REANNOTATION</scope>
    <source>
        <strain>cv. Nisqually</strain>
    </source>
</reference>
<reference key="3">
    <citation type="journal article" date="2014" name="Plant Physiol.">
        <title>Functional and evolutionary analysis of the CASPARIAN STRIP MEMBRANE DOMAIN PROTEIN family.</title>
        <authorList>
            <person name="Roppolo D."/>
            <person name="Boeckmann B."/>
            <person name="Pfister A."/>
            <person name="Boutet E."/>
            <person name="Rubio M.C."/>
            <person name="Denervaud-Tendon V."/>
            <person name="Vermeer J.E."/>
            <person name="Gheyselinck J."/>
            <person name="Xenarios I."/>
            <person name="Geldner N."/>
        </authorList>
    </citation>
    <scope>GENE FAMILY</scope>
    <scope>NOMENCLATURE</scope>
</reference>
<gene>
    <name type="ORF">POPTRDRAFT_778555</name>
</gene>
<feature type="chain" id="PRO_0000412033" description="CASP-like protein 1C1">
    <location>
        <begin position="1"/>
        <end position="164"/>
    </location>
</feature>
<feature type="topological domain" description="Cytoplasmic" evidence="2">
    <location>
        <begin position="1"/>
        <end position="15"/>
    </location>
</feature>
<feature type="transmembrane region" description="Helical" evidence="2">
    <location>
        <begin position="16"/>
        <end position="36"/>
    </location>
</feature>
<feature type="topological domain" description="Extracellular" evidence="2">
    <location>
        <begin position="37"/>
        <end position="56"/>
    </location>
</feature>
<feature type="transmembrane region" description="Helical" evidence="2">
    <location>
        <begin position="57"/>
        <end position="77"/>
    </location>
</feature>
<feature type="topological domain" description="Cytoplasmic" evidence="2">
    <location>
        <begin position="78"/>
        <end position="83"/>
    </location>
</feature>
<feature type="transmembrane region" description="Helical" evidence="2">
    <location>
        <begin position="84"/>
        <end position="104"/>
    </location>
</feature>
<feature type="topological domain" description="Extracellular" evidence="2">
    <location>
        <begin position="105"/>
        <end position="132"/>
    </location>
</feature>
<feature type="transmembrane region" description="Helical" evidence="2">
    <location>
        <begin position="133"/>
        <end position="153"/>
    </location>
</feature>
<feature type="topological domain" description="Cytoplasmic" evidence="2">
    <location>
        <begin position="154"/>
        <end position="164"/>
    </location>
</feature>
<evidence type="ECO:0000250" key="1"/>
<evidence type="ECO:0000255" key="2"/>
<evidence type="ECO:0000305" key="3"/>